<comment type="catalytic activity">
    <reaction evidence="1">
        <text>L-methionyl-[protein] + [thioredoxin]-disulfide + H2O = L-methionyl-(R)-S-oxide-[protein] + [thioredoxin]-dithiol</text>
        <dbReference type="Rhea" id="RHEA:24164"/>
        <dbReference type="Rhea" id="RHEA-COMP:10698"/>
        <dbReference type="Rhea" id="RHEA-COMP:10700"/>
        <dbReference type="Rhea" id="RHEA-COMP:12313"/>
        <dbReference type="Rhea" id="RHEA-COMP:12314"/>
        <dbReference type="ChEBI" id="CHEBI:15377"/>
        <dbReference type="ChEBI" id="CHEBI:16044"/>
        <dbReference type="ChEBI" id="CHEBI:29950"/>
        <dbReference type="ChEBI" id="CHEBI:45764"/>
        <dbReference type="ChEBI" id="CHEBI:50058"/>
        <dbReference type="EC" id="1.8.4.12"/>
    </reaction>
</comment>
<comment type="cofactor">
    <cofactor evidence="1">
        <name>Zn(2+)</name>
        <dbReference type="ChEBI" id="CHEBI:29105"/>
    </cofactor>
    <text evidence="1">Binds 1 zinc ion per subunit. The zinc ion is important for the structural integrity of the protein.</text>
</comment>
<comment type="similarity">
    <text evidence="1">Belongs to the MsrB Met sulfoxide reductase family.</text>
</comment>
<keyword id="KW-0479">Metal-binding</keyword>
<keyword id="KW-0560">Oxidoreductase</keyword>
<keyword id="KW-1185">Reference proteome</keyword>
<keyword id="KW-0862">Zinc</keyword>
<proteinExistence type="inferred from homology"/>
<protein>
    <recommendedName>
        <fullName evidence="1">Peptide methionine sulfoxide reductase MsrB</fullName>
        <ecNumber evidence="1">1.8.4.12</ecNumber>
    </recommendedName>
    <alternativeName>
        <fullName evidence="1">Peptide-methionine (R)-S-oxide reductase</fullName>
    </alternativeName>
</protein>
<accession>B7USF8</accession>
<name>MSRB_ECO27</name>
<organism>
    <name type="scientific">Escherichia coli O127:H6 (strain E2348/69 / EPEC)</name>
    <dbReference type="NCBI Taxonomy" id="574521"/>
    <lineage>
        <taxon>Bacteria</taxon>
        <taxon>Pseudomonadati</taxon>
        <taxon>Pseudomonadota</taxon>
        <taxon>Gammaproteobacteria</taxon>
        <taxon>Enterobacterales</taxon>
        <taxon>Enterobacteriaceae</taxon>
        <taxon>Escherichia</taxon>
    </lineage>
</organism>
<evidence type="ECO:0000255" key="1">
    <source>
        <dbReference type="HAMAP-Rule" id="MF_01400"/>
    </source>
</evidence>
<evidence type="ECO:0000255" key="2">
    <source>
        <dbReference type="PROSITE-ProRule" id="PRU01126"/>
    </source>
</evidence>
<dbReference type="EC" id="1.8.4.12" evidence="1"/>
<dbReference type="EMBL" id="FM180568">
    <property type="protein sequence ID" value="CAS09453.1"/>
    <property type="molecule type" value="Genomic_DNA"/>
</dbReference>
<dbReference type="RefSeq" id="WP_001284618.1">
    <property type="nucleotide sequence ID" value="NC_011601.1"/>
</dbReference>
<dbReference type="SMR" id="B7USF8"/>
<dbReference type="GeneID" id="93775987"/>
<dbReference type="KEGG" id="ecg:E2348C_1905"/>
<dbReference type="HOGENOM" id="CLU_031040_8_5_6"/>
<dbReference type="Proteomes" id="UP000008205">
    <property type="component" value="Chromosome"/>
</dbReference>
<dbReference type="GO" id="GO:0005737">
    <property type="term" value="C:cytoplasm"/>
    <property type="evidence" value="ECO:0007669"/>
    <property type="project" value="TreeGrafter"/>
</dbReference>
<dbReference type="GO" id="GO:0033743">
    <property type="term" value="F:peptide-methionine (R)-S-oxide reductase activity"/>
    <property type="evidence" value="ECO:0007669"/>
    <property type="project" value="UniProtKB-UniRule"/>
</dbReference>
<dbReference type="GO" id="GO:0008270">
    <property type="term" value="F:zinc ion binding"/>
    <property type="evidence" value="ECO:0007669"/>
    <property type="project" value="UniProtKB-UniRule"/>
</dbReference>
<dbReference type="GO" id="GO:0030091">
    <property type="term" value="P:protein repair"/>
    <property type="evidence" value="ECO:0007669"/>
    <property type="project" value="InterPro"/>
</dbReference>
<dbReference type="GO" id="GO:0006979">
    <property type="term" value="P:response to oxidative stress"/>
    <property type="evidence" value="ECO:0007669"/>
    <property type="project" value="InterPro"/>
</dbReference>
<dbReference type="FunFam" id="2.170.150.20:FF:000001">
    <property type="entry name" value="Peptide methionine sulfoxide reductase MsrB"/>
    <property type="match status" value="1"/>
</dbReference>
<dbReference type="Gene3D" id="2.170.150.20">
    <property type="entry name" value="Peptide methionine sulfoxide reductase"/>
    <property type="match status" value="1"/>
</dbReference>
<dbReference type="HAMAP" id="MF_01400">
    <property type="entry name" value="MsrB"/>
    <property type="match status" value="1"/>
</dbReference>
<dbReference type="InterPro" id="IPR028427">
    <property type="entry name" value="Met_Sox_Rdtase_MsrB"/>
</dbReference>
<dbReference type="InterPro" id="IPR002579">
    <property type="entry name" value="Met_Sox_Rdtase_MsrB_dom"/>
</dbReference>
<dbReference type="InterPro" id="IPR011057">
    <property type="entry name" value="Mss4-like_sf"/>
</dbReference>
<dbReference type="NCBIfam" id="TIGR00357">
    <property type="entry name" value="peptide-methionine (R)-S-oxide reductase MsrB"/>
    <property type="match status" value="1"/>
</dbReference>
<dbReference type="PANTHER" id="PTHR10173">
    <property type="entry name" value="METHIONINE SULFOXIDE REDUCTASE"/>
    <property type="match status" value="1"/>
</dbReference>
<dbReference type="PANTHER" id="PTHR10173:SF52">
    <property type="entry name" value="METHIONINE-R-SULFOXIDE REDUCTASE B1"/>
    <property type="match status" value="1"/>
</dbReference>
<dbReference type="Pfam" id="PF01641">
    <property type="entry name" value="SelR"/>
    <property type="match status" value="1"/>
</dbReference>
<dbReference type="SUPFAM" id="SSF51316">
    <property type="entry name" value="Mss4-like"/>
    <property type="match status" value="1"/>
</dbReference>
<dbReference type="PROSITE" id="PS51790">
    <property type="entry name" value="MSRB"/>
    <property type="match status" value="1"/>
</dbReference>
<gene>
    <name evidence="1" type="primary">msrB</name>
    <name type="ordered locus">E2348C_1905</name>
</gene>
<reference key="1">
    <citation type="journal article" date="2009" name="J. Bacteriol.">
        <title>Complete genome sequence and comparative genome analysis of enteropathogenic Escherichia coli O127:H6 strain E2348/69.</title>
        <authorList>
            <person name="Iguchi A."/>
            <person name="Thomson N.R."/>
            <person name="Ogura Y."/>
            <person name="Saunders D."/>
            <person name="Ooka T."/>
            <person name="Henderson I.R."/>
            <person name="Harris D."/>
            <person name="Asadulghani M."/>
            <person name="Kurokawa K."/>
            <person name="Dean P."/>
            <person name="Kenny B."/>
            <person name="Quail M.A."/>
            <person name="Thurston S."/>
            <person name="Dougan G."/>
            <person name="Hayashi T."/>
            <person name="Parkhill J."/>
            <person name="Frankel G."/>
        </authorList>
    </citation>
    <scope>NUCLEOTIDE SEQUENCE [LARGE SCALE GENOMIC DNA]</scope>
    <source>
        <strain>E2348/69 / EPEC</strain>
    </source>
</reference>
<feature type="chain" id="PRO_1000184549" description="Peptide methionine sulfoxide reductase MsrB">
    <location>
        <begin position="1"/>
        <end position="137"/>
    </location>
</feature>
<feature type="domain" description="MsrB" evidence="2">
    <location>
        <begin position="7"/>
        <end position="129"/>
    </location>
</feature>
<feature type="active site" description="Nucleophile" evidence="2">
    <location>
        <position position="118"/>
    </location>
</feature>
<feature type="binding site" evidence="2">
    <location>
        <position position="46"/>
    </location>
    <ligand>
        <name>Zn(2+)</name>
        <dbReference type="ChEBI" id="CHEBI:29105"/>
    </ligand>
</feature>
<feature type="binding site" evidence="2">
    <location>
        <position position="49"/>
    </location>
    <ligand>
        <name>Zn(2+)</name>
        <dbReference type="ChEBI" id="CHEBI:29105"/>
    </ligand>
</feature>
<feature type="binding site" evidence="2">
    <location>
        <position position="95"/>
    </location>
    <ligand>
        <name>Zn(2+)</name>
        <dbReference type="ChEBI" id="CHEBI:29105"/>
    </ligand>
</feature>
<feature type="binding site" evidence="2">
    <location>
        <position position="98"/>
    </location>
    <ligand>
        <name>Zn(2+)</name>
        <dbReference type="ChEBI" id="CHEBI:29105"/>
    </ligand>
</feature>
<sequence length="137" mass="15451">MANKPSAEELKKNLSEMQFYVTQNHGTEPPFTGRLLHNKRDGVYHCLICDAPLFHSQTKYDSGCGWPSFYEPVSEESIRYIKDLSHGMQRIEIRCGNCDAHLGHVFPDGPQPTGERYCVNSASLRFTDGENGEEING</sequence>